<organism>
    <name type="scientific">Cereibacter sphaeroides (strain ATCC 17023 / DSM 158 / JCM 6121 / CCUG 31486 / LMG 2827 / NBRC 12203 / NCIMB 8253 / ATH 2.4.1.)</name>
    <name type="common">Rhodobacter sphaeroides</name>
    <dbReference type="NCBI Taxonomy" id="272943"/>
    <lineage>
        <taxon>Bacteria</taxon>
        <taxon>Pseudomonadati</taxon>
        <taxon>Pseudomonadota</taxon>
        <taxon>Alphaproteobacteria</taxon>
        <taxon>Rhodobacterales</taxon>
        <taxon>Paracoccaceae</taxon>
        <taxon>Cereibacter</taxon>
    </lineage>
</organism>
<gene>
    <name evidence="2" type="primary">napA</name>
    <name type="ordered locus">RHOS4_40230</name>
    <name type="ORF">RSP_4116</name>
</gene>
<evidence type="ECO:0000250" key="1">
    <source>
        <dbReference type="UniProtKB" id="P39185"/>
    </source>
</evidence>
<evidence type="ECO:0000255" key="2">
    <source>
        <dbReference type="HAMAP-Rule" id="MF_01630"/>
    </source>
</evidence>
<evidence type="ECO:0000269" key="3">
    <source>
    </source>
</evidence>
<evidence type="ECO:0000305" key="4"/>
<evidence type="ECO:0007744" key="5">
    <source>
        <dbReference type="PDB" id="1OGY"/>
    </source>
</evidence>
<evidence type="ECO:0007829" key="6">
    <source>
        <dbReference type="PDB" id="1OGY"/>
    </source>
</evidence>
<sequence>MTLTRRDLIKAQAAATAAAAAGLPVSALAQPVTGGAEALRIRWSKAPCRFCGTGCGVMVGTRDGQVVATHGDTQAEVNRGLNCVKGYFLSKIMYGEDRLTTPLLRMKDGVYHKEGEFAPVSWDEAFDVMAAQAKRVLKEKGPKAVGMFGSGQWTIWEGYAASKLMRAGFRSNNLDPNARHCMASAATAFMRTFGMDEPMGCYDDFEAADAFVLWGSNMAEMHPILWSRLTDRRLSHEHVRVAVLSTFTHRSMDLADTPIIFRPGTDLAILNYIAHHIISTGRVNRDFVDRHTNFALGATDIGYGLRPEHQLQLAAKGAADAGAMTPTDFETFAALVSEYTLEKAAEISGVEPALLEELAELYADPDRKVMSLWTMGFNQHVRGVWANHMVYNLHLLTGKISEPGNSPFSLTGQPSACGTAREVGTFAHRLPADMVVTNPEHRAHAEEIWKLPAGLLPDWVGAHAVEQDRKLHDGEINFYWVQVNNNMQAAPNIDQETYPGYRNPENFIVVSDAYPTVTGRCADLVLPAAMWVEKEGAYGNAERRTHFWHQLVEAPGEARSDLWQLMEFSKRFTTDEVWPEEILSAAPAYRGKTLFEVLFANGSVDRFPASDVNPDHANHEAALFGFYPQKGLFEEYAAFGRGHGHDLAPFDTYHEVRGLRWPVVEGEETRWRYREGFDPYVKPGEGLRFYGKPDGRAVILGVPYEPPAESPDEEFGFWLVTGRVLEHWHSGSMTLRVPELYKAFPGAVCFMHPEDARSRGLNRGSEVRVISRRGEIRTRLETRGRNRMPRGVVFVPWFDASQLINKVTLDANDPISRQTDFKKCAVKIEAV</sequence>
<feature type="signal peptide" description="Tat-type signal" evidence="2">
    <location>
        <begin position="1"/>
        <end position="29"/>
    </location>
</feature>
<feature type="chain" id="PRO_0000019171" description="Periplasmic nitrate reductase" evidence="2">
    <location>
        <begin position="30"/>
        <end position="831"/>
    </location>
</feature>
<feature type="domain" description="4Fe-4S Mo/W bis-MGD-type" evidence="2">
    <location>
        <begin position="41"/>
        <end position="97"/>
    </location>
</feature>
<feature type="binding site" evidence="2 3 5">
    <location>
        <position position="48"/>
    </location>
    <ligand>
        <name>[4Fe-4S] cluster</name>
        <dbReference type="ChEBI" id="CHEBI:49883"/>
    </ligand>
</feature>
<feature type="binding site" evidence="2 3 5">
    <location>
        <position position="51"/>
    </location>
    <ligand>
        <name>[4Fe-4S] cluster</name>
        <dbReference type="ChEBI" id="CHEBI:49883"/>
    </ligand>
</feature>
<feature type="binding site" evidence="2 3 5">
    <location>
        <position position="55"/>
    </location>
    <ligand>
        <name>[4Fe-4S] cluster</name>
        <dbReference type="ChEBI" id="CHEBI:49883"/>
    </ligand>
</feature>
<feature type="binding site" evidence="2 3 5">
    <location>
        <position position="83"/>
    </location>
    <ligand>
        <name>[4Fe-4S] cluster</name>
        <dbReference type="ChEBI" id="CHEBI:49883"/>
    </ligand>
</feature>
<feature type="binding site" evidence="2 3 5">
    <location>
        <position position="85"/>
    </location>
    <ligand>
        <name>Mo-bis(molybdopterin guanine dinucleotide)</name>
        <dbReference type="ChEBI" id="CHEBI:60539"/>
    </ligand>
</feature>
<feature type="binding site" evidence="2 3 5">
    <location>
        <position position="152"/>
    </location>
    <ligand>
        <name>Mo-bis(molybdopterin guanine dinucleotide)</name>
        <dbReference type="ChEBI" id="CHEBI:60539"/>
    </ligand>
</feature>
<feature type="binding site" evidence="2 3 5">
    <location>
        <position position="177"/>
    </location>
    <ligand>
        <name>Mo-bis(molybdopterin guanine dinucleotide)</name>
        <dbReference type="ChEBI" id="CHEBI:60539"/>
    </ligand>
</feature>
<feature type="binding site" evidence="2 3 5">
    <location>
        <position position="181"/>
    </location>
    <ligand>
        <name>Mo-bis(molybdopterin guanine dinucleotide)</name>
        <dbReference type="ChEBI" id="CHEBI:60539"/>
    </ligand>
</feature>
<feature type="binding site" evidence="2 3 5">
    <location>
        <begin position="214"/>
        <end position="221"/>
    </location>
    <ligand>
        <name>Mo-bis(molybdopterin guanine dinucleotide)</name>
        <dbReference type="ChEBI" id="CHEBI:60539"/>
    </ligand>
</feature>
<feature type="binding site" evidence="1 2">
    <location>
        <begin position="245"/>
        <end position="249"/>
    </location>
    <ligand>
        <name>Mo-bis(molybdopterin guanine dinucleotide)</name>
        <dbReference type="ChEBI" id="CHEBI:60539"/>
    </ligand>
</feature>
<feature type="binding site" evidence="2 3 5">
    <location>
        <begin position="264"/>
        <end position="266"/>
    </location>
    <ligand>
        <name>Mo-bis(molybdopterin guanine dinucleotide)</name>
        <dbReference type="ChEBI" id="CHEBI:60539"/>
    </ligand>
</feature>
<feature type="binding site" evidence="2 3 5">
    <location>
        <position position="375"/>
    </location>
    <ligand>
        <name>Mo-bis(molybdopterin guanine dinucleotide)</name>
        <dbReference type="ChEBI" id="CHEBI:60539"/>
    </ligand>
</feature>
<feature type="binding site" evidence="2 3 5">
    <location>
        <position position="379"/>
    </location>
    <ligand>
        <name>Mo-bis(molybdopterin guanine dinucleotide)</name>
        <dbReference type="ChEBI" id="CHEBI:60539"/>
    </ligand>
</feature>
<feature type="binding site" evidence="2 3 5">
    <location>
        <position position="485"/>
    </location>
    <ligand>
        <name>Mo-bis(molybdopterin guanine dinucleotide)</name>
        <dbReference type="ChEBI" id="CHEBI:60539"/>
    </ligand>
</feature>
<feature type="binding site" evidence="2 3 5">
    <location>
        <begin position="511"/>
        <end position="512"/>
    </location>
    <ligand>
        <name>Mo-bis(molybdopterin guanine dinucleotide)</name>
        <dbReference type="ChEBI" id="CHEBI:60539"/>
    </ligand>
</feature>
<feature type="binding site" evidence="2 3 5">
    <location>
        <position position="534"/>
    </location>
    <ligand>
        <name>Mo-bis(molybdopterin guanine dinucleotide)</name>
        <dbReference type="ChEBI" id="CHEBI:60539"/>
    </ligand>
</feature>
<feature type="binding site" evidence="2 3 5">
    <location>
        <position position="561"/>
    </location>
    <ligand>
        <name>Mo-bis(molybdopterin guanine dinucleotide)</name>
        <dbReference type="ChEBI" id="CHEBI:60539"/>
    </ligand>
</feature>
<feature type="binding site" evidence="2 3 5">
    <location>
        <begin position="721"/>
        <end position="730"/>
    </location>
    <ligand>
        <name>Mo-bis(molybdopterin guanine dinucleotide)</name>
        <dbReference type="ChEBI" id="CHEBI:60539"/>
    </ligand>
</feature>
<feature type="binding site" evidence="2">
    <location>
        <position position="797"/>
    </location>
    <ligand>
        <name>substrate</name>
    </ligand>
</feature>
<feature type="binding site" evidence="2 3 5">
    <location>
        <position position="805"/>
    </location>
    <ligand>
        <name>Mo-bis(molybdopterin guanine dinucleotide)</name>
        <dbReference type="ChEBI" id="CHEBI:60539"/>
    </ligand>
</feature>
<feature type="binding site" evidence="2 3 5">
    <location>
        <position position="822"/>
    </location>
    <ligand>
        <name>Mo-bis(molybdopterin guanine dinucleotide)</name>
        <dbReference type="ChEBI" id="CHEBI:60539"/>
    </ligand>
</feature>
<feature type="sequence conflict" description="In Ref. 1; CAA86827." evidence="4" ref="1">
    <original>R</original>
    <variation>L</variation>
    <location>
        <position position="135"/>
    </location>
</feature>
<feature type="sequence conflict" description="In Ref. 1." evidence="4" ref="1">
    <original>G</original>
    <variation>A</variation>
    <location>
        <position position="141"/>
    </location>
</feature>
<feature type="sequence conflict" description="In Ref. 1." evidence="4" ref="1">
    <original>K</original>
    <variation>E</variation>
    <location>
        <position position="143"/>
    </location>
</feature>
<feature type="sequence conflict" description="In Ref. 1; CAA86827." evidence="4" ref="1">
    <original>M</original>
    <variation>S</variation>
    <location>
        <position position="252"/>
    </location>
</feature>
<feature type="sequence conflict" description="In Ref. 1; CAA86827." evidence="4" ref="1">
    <original>A</original>
    <variation>S</variation>
    <location>
        <position position="255"/>
    </location>
</feature>
<feature type="sequence conflict" description="In Ref. 1; CAA86827." evidence="4" ref="1">
    <original>L</original>
    <variation>R</variation>
    <location>
        <position position="267"/>
    </location>
</feature>
<feature type="sequence conflict" description="In Ref. 1; CAA86827." evidence="4" ref="1">
    <original>V</original>
    <variation>W</variation>
    <location>
        <position position="369"/>
    </location>
</feature>
<feature type="sequence conflict" description="In Ref. 1; CAA86827." evidence="4" ref="1">
    <original>S</original>
    <variation>F</variation>
    <location>
        <position position="415"/>
    </location>
</feature>
<feature type="sequence conflict" description="In Ref. 1; CAA86827." evidence="4" ref="1">
    <original>C</original>
    <variation>A</variation>
    <location>
        <position position="521"/>
    </location>
</feature>
<feature type="sequence conflict" description="In Ref. 1; CAA86827." evidence="4" ref="1">
    <original>R</original>
    <variation>H</variation>
    <location>
        <position position="660"/>
    </location>
</feature>
<feature type="sequence conflict" description="In Ref. 1; CAA86827." evidence="4" ref="1">
    <original>V</original>
    <variation>W</variation>
    <location>
        <position position="737"/>
    </location>
</feature>
<feature type="strand" evidence="6">
    <location>
        <begin position="42"/>
        <end position="47"/>
    </location>
</feature>
<feature type="strand" evidence="6">
    <location>
        <begin position="56"/>
        <end position="62"/>
    </location>
</feature>
<feature type="strand" evidence="6">
    <location>
        <begin position="65"/>
        <end position="71"/>
    </location>
</feature>
<feature type="turn" evidence="6">
    <location>
        <begin position="76"/>
        <end position="78"/>
    </location>
</feature>
<feature type="helix" evidence="6">
    <location>
        <begin position="84"/>
        <end position="87"/>
    </location>
</feature>
<feature type="helix" evidence="6">
    <location>
        <begin position="88"/>
        <end position="91"/>
    </location>
</feature>
<feature type="strand" evidence="6">
    <location>
        <begin position="103"/>
        <end position="105"/>
    </location>
</feature>
<feature type="strand" evidence="6">
    <location>
        <begin position="107"/>
        <end position="109"/>
    </location>
</feature>
<feature type="helix" evidence="6">
    <location>
        <begin position="122"/>
        <end position="139"/>
    </location>
</feature>
<feature type="helix" evidence="6">
    <location>
        <begin position="142"/>
        <end position="144"/>
    </location>
</feature>
<feature type="strand" evidence="6">
    <location>
        <begin position="145"/>
        <end position="149"/>
    </location>
</feature>
<feature type="helix" evidence="6">
    <location>
        <begin position="155"/>
        <end position="166"/>
    </location>
</feature>
<feature type="strand" evidence="6">
    <location>
        <begin position="174"/>
        <end position="176"/>
    </location>
</feature>
<feature type="helix" evidence="6">
    <location>
        <begin position="178"/>
        <end position="181"/>
    </location>
</feature>
<feature type="helix" evidence="6">
    <location>
        <begin position="183"/>
        <end position="193"/>
    </location>
</feature>
<feature type="helix" evidence="6">
    <location>
        <begin position="204"/>
        <end position="207"/>
    </location>
</feature>
<feature type="strand" evidence="6">
    <location>
        <begin position="209"/>
        <end position="215"/>
    </location>
</feature>
<feature type="helix" evidence="6">
    <location>
        <begin position="218"/>
        <end position="221"/>
    </location>
</feature>
<feature type="helix" evidence="6">
    <location>
        <begin position="223"/>
        <end position="235"/>
    </location>
</feature>
<feature type="strand" evidence="6">
    <location>
        <begin position="240"/>
        <end position="248"/>
    </location>
</feature>
<feature type="helix" evidence="6">
    <location>
        <begin position="250"/>
        <end position="253"/>
    </location>
</feature>
<feature type="strand" evidence="6">
    <location>
        <begin position="256"/>
        <end position="260"/>
    </location>
</feature>
<feature type="turn" evidence="6">
    <location>
        <begin position="263"/>
        <end position="265"/>
    </location>
</feature>
<feature type="helix" evidence="6">
    <location>
        <begin position="266"/>
        <end position="279"/>
    </location>
</feature>
<feature type="helix" evidence="6">
    <location>
        <begin position="285"/>
        <end position="291"/>
    </location>
</feature>
<feature type="strand" evidence="6">
    <location>
        <begin position="292"/>
        <end position="296"/>
    </location>
</feature>
<feature type="helix" evidence="6">
    <location>
        <begin position="310"/>
        <end position="313"/>
    </location>
</feature>
<feature type="helix" evidence="6">
    <location>
        <begin position="329"/>
        <end position="337"/>
    </location>
</feature>
<feature type="helix" evidence="6">
    <location>
        <begin position="341"/>
        <end position="348"/>
    </location>
</feature>
<feature type="helix" evidence="6">
    <location>
        <begin position="352"/>
        <end position="361"/>
    </location>
</feature>
<feature type="strand" evidence="6">
    <location>
        <begin position="369"/>
        <end position="374"/>
    </location>
</feature>
<feature type="helix" evidence="6">
    <location>
        <begin position="375"/>
        <end position="378"/>
    </location>
</feature>
<feature type="helix" evidence="6">
    <location>
        <begin position="383"/>
        <end position="397"/>
    </location>
</feature>
<feature type="strand" evidence="6">
    <location>
        <begin position="405"/>
        <end position="409"/>
    </location>
</feature>
<feature type="turn" evidence="6">
    <location>
        <begin position="414"/>
        <end position="419"/>
    </location>
</feature>
<feature type="helix" evidence="6">
    <location>
        <begin position="420"/>
        <end position="423"/>
    </location>
</feature>
<feature type="turn" evidence="6">
    <location>
        <begin position="431"/>
        <end position="433"/>
    </location>
</feature>
<feature type="strand" evidence="6">
    <location>
        <begin position="434"/>
        <end position="437"/>
    </location>
</feature>
<feature type="helix" evidence="6">
    <location>
        <begin position="439"/>
        <end position="448"/>
    </location>
</feature>
<feature type="helix" evidence="6">
    <location>
        <begin position="464"/>
        <end position="472"/>
    </location>
</feature>
<feature type="strand" evidence="6">
    <location>
        <begin position="478"/>
        <end position="483"/>
    </location>
</feature>
<feature type="helix" evidence="6">
    <location>
        <begin position="486"/>
        <end position="489"/>
    </location>
</feature>
<feature type="turn" evidence="6">
    <location>
        <begin position="491"/>
        <end position="497"/>
    </location>
</feature>
<feature type="helix" evidence="6">
    <location>
        <begin position="498"/>
        <end position="502"/>
    </location>
</feature>
<feature type="strand" evidence="6">
    <location>
        <begin position="507"/>
        <end position="514"/>
    </location>
</feature>
<feature type="helix" evidence="6">
    <location>
        <begin position="517"/>
        <end position="520"/>
    </location>
</feature>
<feature type="strand" evidence="6">
    <location>
        <begin position="522"/>
        <end position="528"/>
    </location>
</feature>
<feature type="helix" evidence="6">
    <location>
        <begin position="531"/>
        <end position="533"/>
    </location>
</feature>
<feature type="strand" evidence="6">
    <location>
        <begin position="536"/>
        <end position="539"/>
    </location>
</feature>
<feature type="strand" evidence="6">
    <location>
        <begin position="543"/>
        <end position="548"/>
    </location>
</feature>
<feature type="helix" evidence="6">
    <location>
        <begin position="561"/>
        <end position="569"/>
    </location>
</feature>
<feature type="helix" evidence="6">
    <location>
        <begin position="574"/>
        <end position="577"/>
    </location>
</feature>
<feature type="helix" evidence="6">
    <location>
        <begin position="580"/>
        <end position="585"/>
    </location>
</feature>
<feature type="strand" evidence="6">
    <location>
        <begin position="587"/>
        <end position="591"/>
    </location>
</feature>
<feature type="turn" evidence="6">
    <location>
        <begin position="594"/>
        <end position="599"/>
    </location>
</feature>
<feature type="strand" evidence="6">
    <location>
        <begin position="601"/>
        <end position="605"/>
    </location>
</feature>
<feature type="strand" evidence="6">
    <location>
        <begin position="607"/>
        <end position="612"/>
    </location>
</feature>
<feature type="strand" evidence="6">
    <location>
        <begin position="614"/>
        <end position="617"/>
    </location>
</feature>
<feature type="helix" evidence="6">
    <location>
        <begin position="619"/>
        <end position="622"/>
    </location>
</feature>
<feature type="strand" evidence="6">
    <location>
        <begin position="623"/>
        <end position="626"/>
    </location>
</feature>
<feature type="helix" evidence="6">
    <location>
        <begin position="628"/>
        <end position="637"/>
    </location>
</feature>
<feature type="strand" evidence="6">
    <location>
        <begin position="640"/>
        <end position="644"/>
    </location>
</feature>
<feature type="helix" evidence="6">
    <location>
        <begin position="652"/>
        <end position="655"/>
    </location>
</feature>
<feature type="strand" evidence="6">
    <location>
        <begin position="659"/>
        <end position="661"/>
    </location>
</feature>
<feature type="strand" evidence="6">
    <location>
        <begin position="670"/>
        <end position="675"/>
    </location>
</feature>
<feature type="strand" evidence="6">
    <location>
        <begin position="692"/>
        <end position="694"/>
    </location>
</feature>
<feature type="strand" evidence="6">
    <location>
        <begin position="697"/>
        <end position="701"/>
    </location>
</feature>
<feature type="strand" evidence="6">
    <location>
        <begin position="713"/>
        <end position="715"/>
    </location>
</feature>
<feature type="strand" evidence="6">
    <location>
        <begin position="717"/>
        <end position="722"/>
    </location>
</feature>
<feature type="helix" evidence="6">
    <location>
        <begin position="734"/>
        <end position="736"/>
    </location>
</feature>
<feature type="helix" evidence="6">
    <location>
        <begin position="738"/>
        <end position="743"/>
    </location>
</feature>
<feature type="strand" evidence="6">
    <location>
        <begin position="748"/>
        <end position="750"/>
    </location>
</feature>
<feature type="helix" evidence="6">
    <location>
        <begin position="753"/>
        <end position="758"/>
    </location>
</feature>
<feature type="strand" evidence="6">
    <location>
        <begin position="766"/>
        <end position="770"/>
    </location>
</feature>
<feature type="strand" evidence="6">
    <location>
        <begin position="775"/>
        <end position="787"/>
    </location>
</feature>
<feature type="strand" evidence="6">
    <location>
        <begin position="792"/>
        <end position="796"/>
    </location>
</feature>
<feature type="strand" evidence="6">
    <location>
        <begin position="800"/>
        <end position="802"/>
    </location>
</feature>
<feature type="helix" evidence="6">
    <location>
        <begin position="804"/>
        <end position="806"/>
    </location>
</feature>
<feature type="turn" evidence="6">
    <location>
        <begin position="814"/>
        <end position="816"/>
    </location>
</feature>
<feature type="strand" evidence="6">
    <location>
        <begin position="825"/>
        <end position="829"/>
    </location>
</feature>
<accession>Q53176</accession>
<accession>Q3IV43</accession>
<dbReference type="EC" id="1.9.6.1" evidence="2 3"/>
<dbReference type="EMBL" id="Z46806">
    <property type="protein sequence ID" value="CAA86827.1"/>
    <property type="molecule type" value="Genomic_DNA"/>
</dbReference>
<dbReference type="EMBL" id="CP000146">
    <property type="protein sequence ID" value="ABA81591.1"/>
    <property type="molecule type" value="Genomic_DNA"/>
</dbReference>
<dbReference type="RefSeq" id="WP_011331398.1">
    <property type="nucleotide sequence ID" value="NC_007489.1"/>
</dbReference>
<dbReference type="RefSeq" id="YP_345332.1">
    <property type="nucleotide sequence ID" value="NC_007489.1"/>
</dbReference>
<dbReference type="PDB" id="1OGY">
    <property type="method" value="X-ray"/>
    <property type="resolution" value="3.20 A"/>
    <property type="chains" value="A/C/E/G/I/K/M/O=30-831"/>
</dbReference>
<dbReference type="PDBsum" id="1OGY"/>
<dbReference type="SMR" id="Q53176"/>
<dbReference type="IntAct" id="Q53176">
    <property type="interactions" value="1"/>
</dbReference>
<dbReference type="EnsemblBacteria" id="ABA81591">
    <property type="protein sequence ID" value="ABA81591"/>
    <property type="gene ID" value="RSP_4116"/>
</dbReference>
<dbReference type="GeneID" id="3711832"/>
<dbReference type="KEGG" id="rsp:RSP_4116"/>
<dbReference type="PATRIC" id="fig|272943.9.peg.178"/>
<dbReference type="OrthoDB" id="9816402at2"/>
<dbReference type="PhylomeDB" id="Q53176"/>
<dbReference type="BRENDA" id="1.9.6.1">
    <property type="organism ID" value="5383"/>
</dbReference>
<dbReference type="EvolutionaryTrace" id="Q53176"/>
<dbReference type="Proteomes" id="UP000002703">
    <property type="component" value="Plasmid pRS241c"/>
</dbReference>
<dbReference type="GO" id="GO:0016020">
    <property type="term" value="C:membrane"/>
    <property type="evidence" value="ECO:0007669"/>
    <property type="project" value="TreeGrafter"/>
</dbReference>
<dbReference type="GO" id="GO:0009325">
    <property type="term" value="C:nitrate reductase complex"/>
    <property type="evidence" value="ECO:0007669"/>
    <property type="project" value="TreeGrafter"/>
</dbReference>
<dbReference type="GO" id="GO:0042597">
    <property type="term" value="C:periplasmic space"/>
    <property type="evidence" value="ECO:0007669"/>
    <property type="project" value="UniProtKB-SubCell"/>
</dbReference>
<dbReference type="GO" id="GO:0051539">
    <property type="term" value="F:4 iron, 4 sulfur cluster binding"/>
    <property type="evidence" value="ECO:0007669"/>
    <property type="project" value="UniProtKB-KW"/>
</dbReference>
<dbReference type="GO" id="GO:0009055">
    <property type="term" value="F:electron transfer activity"/>
    <property type="evidence" value="ECO:0007669"/>
    <property type="project" value="UniProtKB-UniRule"/>
</dbReference>
<dbReference type="GO" id="GO:0005506">
    <property type="term" value="F:iron ion binding"/>
    <property type="evidence" value="ECO:0007669"/>
    <property type="project" value="UniProtKB-UniRule"/>
</dbReference>
<dbReference type="GO" id="GO:0030151">
    <property type="term" value="F:molybdenum ion binding"/>
    <property type="evidence" value="ECO:0007669"/>
    <property type="project" value="InterPro"/>
</dbReference>
<dbReference type="GO" id="GO:0043546">
    <property type="term" value="F:molybdopterin cofactor binding"/>
    <property type="evidence" value="ECO:0007669"/>
    <property type="project" value="InterPro"/>
</dbReference>
<dbReference type="GO" id="GO:0050140">
    <property type="term" value="F:nitrate reductase (cytochrome) activity"/>
    <property type="evidence" value="ECO:0007669"/>
    <property type="project" value="UniProtKB-EC"/>
</dbReference>
<dbReference type="GO" id="GO:0045333">
    <property type="term" value="P:cellular respiration"/>
    <property type="evidence" value="ECO:0007669"/>
    <property type="project" value="UniProtKB-ARBA"/>
</dbReference>
<dbReference type="GO" id="GO:0006777">
    <property type="term" value="P:Mo-molybdopterin cofactor biosynthetic process"/>
    <property type="evidence" value="ECO:0007669"/>
    <property type="project" value="UniProtKB-UniRule"/>
</dbReference>
<dbReference type="GO" id="GO:0042128">
    <property type="term" value="P:nitrate assimilation"/>
    <property type="evidence" value="ECO:0007669"/>
    <property type="project" value="UniProtKB-UniRule"/>
</dbReference>
<dbReference type="CDD" id="cd02791">
    <property type="entry name" value="MopB_CT_Nitrate-R-NapA-like"/>
    <property type="match status" value="1"/>
</dbReference>
<dbReference type="CDD" id="cd02754">
    <property type="entry name" value="MopB_Nitrate-R-NapA-like"/>
    <property type="match status" value="1"/>
</dbReference>
<dbReference type="FunFam" id="2.40.40.20:FF:000005">
    <property type="entry name" value="Periplasmic nitrate reductase"/>
    <property type="match status" value="1"/>
</dbReference>
<dbReference type="Gene3D" id="2.40.40.20">
    <property type="match status" value="1"/>
</dbReference>
<dbReference type="Gene3D" id="3.30.200.210">
    <property type="match status" value="1"/>
</dbReference>
<dbReference type="Gene3D" id="3.40.50.740">
    <property type="match status" value="1"/>
</dbReference>
<dbReference type="Gene3D" id="3.40.228.10">
    <property type="entry name" value="Dimethylsulfoxide Reductase, domain 2"/>
    <property type="match status" value="1"/>
</dbReference>
<dbReference type="HAMAP" id="MF_01630">
    <property type="entry name" value="Nitrate_reduct_NapA"/>
    <property type="match status" value="1"/>
</dbReference>
<dbReference type="InterPro" id="IPR009010">
    <property type="entry name" value="Asp_de-COase-like_dom_sf"/>
</dbReference>
<dbReference type="InterPro" id="IPR041957">
    <property type="entry name" value="CT_Nitrate-R-NapA-like"/>
</dbReference>
<dbReference type="InterPro" id="IPR006657">
    <property type="entry name" value="MoPterin_dinucl-bd_dom"/>
</dbReference>
<dbReference type="InterPro" id="IPR006656">
    <property type="entry name" value="Mopterin_OxRdtase"/>
</dbReference>
<dbReference type="InterPro" id="IPR006963">
    <property type="entry name" value="Mopterin_OxRdtase_4Fe-4S_dom"/>
</dbReference>
<dbReference type="InterPro" id="IPR027467">
    <property type="entry name" value="MopterinOxRdtase_cofactor_BS"/>
</dbReference>
<dbReference type="InterPro" id="IPR010051">
    <property type="entry name" value="Periplasm_NO3_reductase_lsu"/>
</dbReference>
<dbReference type="InterPro" id="IPR050123">
    <property type="entry name" value="Prok_molybdopt-oxidoreductase"/>
</dbReference>
<dbReference type="InterPro" id="IPR006311">
    <property type="entry name" value="TAT_signal"/>
</dbReference>
<dbReference type="InterPro" id="IPR019546">
    <property type="entry name" value="TAT_signal_bac_arc"/>
</dbReference>
<dbReference type="NCBIfam" id="TIGR01706">
    <property type="entry name" value="NAPA"/>
    <property type="match status" value="1"/>
</dbReference>
<dbReference type="NCBIfam" id="NF010055">
    <property type="entry name" value="PRK13532.1"/>
    <property type="match status" value="1"/>
</dbReference>
<dbReference type="NCBIfam" id="TIGR01409">
    <property type="entry name" value="TAT_signal_seq"/>
    <property type="match status" value="1"/>
</dbReference>
<dbReference type="PANTHER" id="PTHR43105:SF11">
    <property type="entry name" value="PERIPLASMIC NITRATE REDUCTASE"/>
    <property type="match status" value="1"/>
</dbReference>
<dbReference type="PANTHER" id="PTHR43105">
    <property type="entry name" value="RESPIRATORY NITRATE REDUCTASE"/>
    <property type="match status" value="1"/>
</dbReference>
<dbReference type="Pfam" id="PF04879">
    <property type="entry name" value="Molybdop_Fe4S4"/>
    <property type="match status" value="1"/>
</dbReference>
<dbReference type="Pfam" id="PF00384">
    <property type="entry name" value="Molybdopterin"/>
    <property type="match status" value="1"/>
</dbReference>
<dbReference type="Pfam" id="PF01568">
    <property type="entry name" value="Molydop_binding"/>
    <property type="match status" value="1"/>
</dbReference>
<dbReference type="SMART" id="SM00926">
    <property type="entry name" value="Molybdop_Fe4S4"/>
    <property type="match status" value="1"/>
</dbReference>
<dbReference type="SUPFAM" id="SSF50692">
    <property type="entry name" value="ADC-like"/>
    <property type="match status" value="1"/>
</dbReference>
<dbReference type="SUPFAM" id="SSF53706">
    <property type="entry name" value="Formate dehydrogenase/DMSO reductase, domains 1-3"/>
    <property type="match status" value="1"/>
</dbReference>
<dbReference type="PROSITE" id="PS51669">
    <property type="entry name" value="4FE4S_MOW_BIS_MGD"/>
    <property type="match status" value="1"/>
</dbReference>
<dbReference type="PROSITE" id="PS00551">
    <property type="entry name" value="MOLYBDOPTERIN_PROK_1"/>
    <property type="match status" value="1"/>
</dbReference>
<dbReference type="PROSITE" id="PS51318">
    <property type="entry name" value="TAT"/>
    <property type="match status" value="1"/>
</dbReference>
<reference key="1">
    <citation type="journal article" date="1996" name="Mol. Microbiol.">
        <title>Isolation of periplasmic nitrate reductase genes from Rhodobacter sphaeroides DSM 158: structural and functional differences among prokaryotic nitrate reductases.</title>
        <authorList>
            <person name="Reyes F."/>
            <person name="Roldan M.D."/>
            <person name="Klipp W."/>
            <person name="Castillo F."/>
            <person name="Moreno-Vivian C."/>
        </authorList>
    </citation>
    <scope>NUCLEOTIDE SEQUENCE [GENOMIC DNA]</scope>
</reference>
<reference key="2">
    <citation type="submission" date="2005-09" db="EMBL/GenBank/DDBJ databases">
        <title>Complete sequence of plasmid C of Rhodobacter sphaeroides 2.4.1.</title>
        <authorList>
            <person name="Copeland A."/>
            <person name="Lucas S."/>
            <person name="Lapidus A."/>
            <person name="Barry K."/>
            <person name="Detter J.C."/>
            <person name="Glavina T."/>
            <person name="Hammon N."/>
            <person name="Israni S."/>
            <person name="Pitluck S."/>
            <person name="Richardson P."/>
            <person name="Mackenzie C."/>
            <person name="Choudhary M."/>
            <person name="Larimer F."/>
            <person name="Hauser L.J."/>
            <person name="Land M."/>
            <person name="Donohue T.J."/>
            <person name="Kaplan S."/>
        </authorList>
    </citation>
    <scope>NUCLEOTIDE SEQUENCE [LARGE SCALE GENOMIC DNA]</scope>
    <source>
        <strain>ATCC 17023 / DSM 158 / JCM 6121 / CCUG 31486 / LMG 2827 / NBRC 12203 / NCIMB 8253 / ATH 2.4.1.</strain>
        <plasmid>pRS241c</plasmid>
    </source>
</reference>
<reference key="3">
    <citation type="journal article" date="2003" name="Nat. Struct. Biol.">
        <title>Structural and redox plasticity in the heterodimeric periplasmic nitrate reductase.</title>
        <authorList>
            <person name="Arnoux P."/>
            <person name="Sabaty M."/>
            <person name="Alric J."/>
            <person name="Frangioni B."/>
            <person name="Guigliarelli B."/>
            <person name="Adriano J.-M."/>
            <person name="Pignol D."/>
        </authorList>
    </citation>
    <scope>X-RAY CRYSTALLOGRAPHY (3.20 ANGSTROMS) OF 30-831 IN COMPLEX WITH NAPB; IRON-SULFUR (4FE-4S) AND MOLYBDENUM MOLYBDOPTERIN COFACTOR</scope>
    <scope>CATALYTIC ACTIVITY</scope>
    <scope>COFACTOR</scope>
</reference>
<proteinExistence type="evidence at protein level"/>
<name>NAPA_CERS4</name>
<keyword id="KW-0002">3D-structure</keyword>
<keyword id="KW-0004">4Fe-4S</keyword>
<keyword id="KW-0249">Electron transport</keyword>
<keyword id="KW-0408">Iron</keyword>
<keyword id="KW-0411">Iron-sulfur</keyword>
<keyword id="KW-0479">Metal-binding</keyword>
<keyword id="KW-0500">Molybdenum</keyword>
<keyword id="KW-0534">Nitrate assimilation</keyword>
<keyword id="KW-0560">Oxidoreductase</keyword>
<keyword id="KW-0574">Periplasm</keyword>
<keyword id="KW-0614">Plasmid</keyword>
<keyword id="KW-1185">Reference proteome</keyword>
<keyword id="KW-0732">Signal</keyword>
<keyword id="KW-0813">Transport</keyword>
<protein>
    <recommendedName>
        <fullName evidence="2">Periplasmic nitrate reductase</fullName>
        <ecNumber evidence="2 3">1.9.6.1</ecNumber>
    </recommendedName>
</protein>
<geneLocation type="plasmid">
    <name>pRS241c</name>
</geneLocation>
<comment type="function">
    <text evidence="2 3">Catalytic subunit of the periplasmic nitrate reductase complex NapAB. Receives electrons from NapB and catalyzes the reduction of nitrate to nitrite.</text>
</comment>
<comment type="catalytic activity">
    <reaction evidence="2 3">
        <text>2 Fe(II)-[cytochrome] + nitrate + 2 H(+) = 2 Fe(III)-[cytochrome] + nitrite + H2O</text>
        <dbReference type="Rhea" id="RHEA:12909"/>
        <dbReference type="Rhea" id="RHEA-COMP:11777"/>
        <dbReference type="Rhea" id="RHEA-COMP:11778"/>
        <dbReference type="ChEBI" id="CHEBI:15377"/>
        <dbReference type="ChEBI" id="CHEBI:15378"/>
        <dbReference type="ChEBI" id="CHEBI:16301"/>
        <dbReference type="ChEBI" id="CHEBI:17632"/>
        <dbReference type="ChEBI" id="CHEBI:29033"/>
        <dbReference type="ChEBI" id="CHEBI:29034"/>
        <dbReference type="EC" id="1.9.6.1"/>
    </reaction>
</comment>
<comment type="cofactor">
    <cofactor evidence="2 3">
        <name>[4Fe-4S] cluster</name>
        <dbReference type="ChEBI" id="CHEBI:49883"/>
    </cofactor>
    <text evidence="2 3">Binds 1 [4Fe-4S] cluster.</text>
</comment>
<comment type="cofactor">
    <cofactor evidence="2 3">
        <name>Mo-bis(molybdopterin guanine dinucleotide)</name>
        <dbReference type="ChEBI" id="CHEBI:60539"/>
    </cofactor>
    <text evidence="2 3">Binds 1 molybdenum-bis(molybdopterin guanine dinucleotide) (Mo-bis-MGD) cofactor per subunit.</text>
</comment>
<comment type="subunit">
    <text evidence="2 3">Component of the periplasmic nitrate reductase NapAB complex composed of NapA and NapB.</text>
</comment>
<comment type="subcellular location">
    <subcellularLocation>
        <location evidence="2">Periplasm</location>
    </subcellularLocation>
</comment>
<comment type="induction">
    <text>Nitrate reductase activity can be induced by nitrate and not repressed by ammonium or oxygen.</text>
</comment>
<comment type="PTM">
    <text evidence="2">Predicted to be exported by the Tat system. The position of the signal peptide cleavage has not been experimentally proven.</text>
</comment>
<comment type="similarity">
    <text evidence="2">Belongs to the prokaryotic molybdopterin-containing oxidoreductase family. NasA/NapA/NarB subfamily.</text>
</comment>